<comment type="function">
    <text evidence="1">Catalyzes the conversion of AMP and phosphate to adenine and ribose 1,5-bisphosphate (R15P). Exhibits phosphorylase activity toward CMP and UMP in addition to AMP. Functions in an archaeal AMP degradation pathway, together with R15P isomerase and RubisCO.</text>
</comment>
<comment type="catalytic activity">
    <reaction evidence="1">
        <text>AMP + phosphate = alpha-D-ribose 1,5-bisphosphate + adenine</text>
        <dbReference type="Rhea" id="RHEA:36975"/>
        <dbReference type="ChEBI" id="CHEBI:16708"/>
        <dbReference type="ChEBI" id="CHEBI:43474"/>
        <dbReference type="ChEBI" id="CHEBI:68688"/>
        <dbReference type="ChEBI" id="CHEBI:456215"/>
        <dbReference type="EC" id="2.4.2.57"/>
    </reaction>
</comment>
<comment type="catalytic activity">
    <reaction evidence="1">
        <text>CMP + phosphate = cytosine + alpha-D-ribose 1,5-bisphosphate</text>
        <dbReference type="Rhea" id="RHEA:36987"/>
        <dbReference type="ChEBI" id="CHEBI:16040"/>
        <dbReference type="ChEBI" id="CHEBI:43474"/>
        <dbReference type="ChEBI" id="CHEBI:60377"/>
        <dbReference type="ChEBI" id="CHEBI:68688"/>
        <dbReference type="EC" id="2.4.2.57"/>
    </reaction>
</comment>
<comment type="catalytic activity">
    <reaction evidence="1">
        <text>UMP + phosphate = alpha-D-ribose 1,5-bisphosphate + uracil</text>
        <dbReference type="Rhea" id="RHEA:36991"/>
        <dbReference type="ChEBI" id="CHEBI:17568"/>
        <dbReference type="ChEBI" id="CHEBI:43474"/>
        <dbReference type="ChEBI" id="CHEBI:57865"/>
        <dbReference type="ChEBI" id="CHEBI:68688"/>
        <dbReference type="EC" id="2.4.2.57"/>
    </reaction>
</comment>
<comment type="similarity">
    <text evidence="1">Belongs to the thymidine/pyrimidine-nucleoside phosphorylase family. Type 2 subfamily.</text>
</comment>
<protein>
    <recommendedName>
        <fullName evidence="1">AMP phosphorylase 2</fullName>
        <shortName evidence="1">AMPpase 2</shortName>
        <ecNumber evidence="1">2.4.2.57</ecNumber>
    </recommendedName>
    <alternativeName>
        <fullName evidence="1">Nucleoside monophosphate phosphorylase 2</fullName>
        <shortName evidence="1">NMP phosphorylase 2</shortName>
    </alternativeName>
</protein>
<name>AMPP2_ARCFU</name>
<dbReference type="EC" id="2.4.2.57" evidence="1"/>
<dbReference type="EMBL" id="AE000782">
    <property type="protein sequence ID" value="AAB89902.1"/>
    <property type="molecule type" value="Genomic_DNA"/>
</dbReference>
<dbReference type="PIR" id="E69417">
    <property type="entry name" value="E69417"/>
</dbReference>
<dbReference type="RefSeq" id="WP_010878839.1">
    <property type="nucleotide sequence ID" value="NC_000917.1"/>
</dbReference>
<dbReference type="SMR" id="O28927"/>
<dbReference type="STRING" id="224325.AF_1342"/>
<dbReference type="PaxDb" id="224325-AF_1342"/>
<dbReference type="EnsemblBacteria" id="AAB89902">
    <property type="protein sequence ID" value="AAB89902"/>
    <property type="gene ID" value="AF_1342"/>
</dbReference>
<dbReference type="KEGG" id="afu:AF_1342"/>
<dbReference type="eggNOG" id="arCOG02013">
    <property type="taxonomic scope" value="Archaea"/>
</dbReference>
<dbReference type="HOGENOM" id="CLU_025040_6_0_2"/>
<dbReference type="OrthoDB" id="9827at2157"/>
<dbReference type="PhylomeDB" id="O28927"/>
<dbReference type="Proteomes" id="UP000002199">
    <property type="component" value="Chromosome"/>
</dbReference>
<dbReference type="GO" id="GO:0005829">
    <property type="term" value="C:cytosol"/>
    <property type="evidence" value="ECO:0007669"/>
    <property type="project" value="TreeGrafter"/>
</dbReference>
<dbReference type="GO" id="GO:0004645">
    <property type="term" value="F:1,4-alpha-oligoglucan phosphorylase activity"/>
    <property type="evidence" value="ECO:0007669"/>
    <property type="project" value="InterPro"/>
</dbReference>
<dbReference type="GO" id="GO:0016208">
    <property type="term" value="F:AMP binding"/>
    <property type="evidence" value="ECO:0007669"/>
    <property type="project" value="UniProtKB-UniRule"/>
</dbReference>
<dbReference type="GO" id="GO:0016763">
    <property type="term" value="F:pentosyltransferase activity"/>
    <property type="evidence" value="ECO:0007669"/>
    <property type="project" value="UniProtKB-UniRule"/>
</dbReference>
<dbReference type="GO" id="GO:0006196">
    <property type="term" value="P:AMP catabolic process"/>
    <property type="evidence" value="ECO:0007669"/>
    <property type="project" value="UniProtKB-UniRule"/>
</dbReference>
<dbReference type="GO" id="GO:0046125">
    <property type="term" value="P:pyrimidine deoxyribonucleoside metabolic process"/>
    <property type="evidence" value="ECO:0007669"/>
    <property type="project" value="InterPro"/>
</dbReference>
<dbReference type="GO" id="GO:0006206">
    <property type="term" value="P:pyrimidine nucleobase metabolic process"/>
    <property type="evidence" value="ECO:0007669"/>
    <property type="project" value="InterPro"/>
</dbReference>
<dbReference type="Gene3D" id="1.20.970.50">
    <property type="match status" value="1"/>
</dbReference>
<dbReference type="Gene3D" id="2.40.40.20">
    <property type="match status" value="1"/>
</dbReference>
<dbReference type="Gene3D" id="3.40.1030.10">
    <property type="entry name" value="Nucleoside phosphorylase/phosphoribosyltransferase catalytic domain"/>
    <property type="match status" value="1"/>
</dbReference>
<dbReference type="Gene3D" id="3.90.1170.30">
    <property type="entry name" value="Pyrimidine nucleoside phosphorylase-like, C-terminal domain"/>
    <property type="match status" value="1"/>
</dbReference>
<dbReference type="HAMAP" id="MF_02132">
    <property type="entry name" value="AMP_phosphorylase"/>
    <property type="match status" value="1"/>
</dbReference>
<dbReference type="InterPro" id="IPR017713">
    <property type="entry name" value="AMP_phosphorylase"/>
</dbReference>
<dbReference type="InterPro" id="IPR000312">
    <property type="entry name" value="Glycosyl_Trfase_fam3"/>
</dbReference>
<dbReference type="InterPro" id="IPR017459">
    <property type="entry name" value="Glycosyl_Trfase_fam3_N_dom"/>
</dbReference>
<dbReference type="InterPro" id="IPR036320">
    <property type="entry name" value="Glycosyl_Trfase_fam3_N_dom_sf"/>
</dbReference>
<dbReference type="InterPro" id="IPR035902">
    <property type="entry name" value="Nuc_phospho_transferase"/>
</dbReference>
<dbReference type="InterPro" id="IPR036566">
    <property type="entry name" value="PYNP-like_C_sf"/>
</dbReference>
<dbReference type="InterPro" id="IPR013102">
    <property type="entry name" value="PYNP_C"/>
</dbReference>
<dbReference type="InterPro" id="IPR017872">
    <property type="entry name" value="Pyrmidine_PPase_CS"/>
</dbReference>
<dbReference type="InterPro" id="IPR013466">
    <property type="entry name" value="Thymidine/AMP_Pase"/>
</dbReference>
<dbReference type="InterPro" id="IPR000053">
    <property type="entry name" value="Thymidine/pyrmidine_PPase"/>
</dbReference>
<dbReference type="NCBIfam" id="TIGR03327">
    <property type="entry name" value="AMP_phos"/>
    <property type="match status" value="1"/>
</dbReference>
<dbReference type="NCBIfam" id="TIGR02645">
    <property type="entry name" value="ARCH_P_rylase"/>
    <property type="match status" value="1"/>
</dbReference>
<dbReference type="NCBIfam" id="NF003338">
    <property type="entry name" value="PRK04350.1"/>
    <property type="match status" value="1"/>
</dbReference>
<dbReference type="PANTHER" id="PTHR10515">
    <property type="entry name" value="THYMIDINE PHOSPHORYLASE"/>
    <property type="match status" value="1"/>
</dbReference>
<dbReference type="PANTHER" id="PTHR10515:SF0">
    <property type="entry name" value="THYMIDINE PHOSPHORYLASE"/>
    <property type="match status" value="1"/>
</dbReference>
<dbReference type="Pfam" id="PF02885">
    <property type="entry name" value="Glycos_trans_3N"/>
    <property type="match status" value="1"/>
</dbReference>
<dbReference type="Pfam" id="PF00591">
    <property type="entry name" value="Glycos_transf_3"/>
    <property type="match status" value="1"/>
</dbReference>
<dbReference type="Pfam" id="PF07831">
    <property type="entry name" value="PYNP_C"/>
    <property type="match status" value="1"/>
</dbReference>
<dbReference type="SMART" id="SM00941">
    <property type="entry name" value="PYNP_C"/>
    <property type="match status" value="1"/>
</dbReference>
<dbReference type="SUPFAM" id="SSF52418">
    <property type="entry name" value="Nucleoside phosphorylase/phosphoribosyltransferase catalytic domain"/>
    <property type="match status" value="1"/>
</dbReference>
<dbReference type="SUPFAM" id="SSF47648">
    <property type="entry name" value="Nucleoside phosphorylase/phosphoribosyltransferase N-terminal domain"/>
    <property type="match status" value="1"/>
</dbReference>
<dbReference type="SUPFAM" id="SSF54680">
    <property type="entry name" value="Pyrimidine nucleoside phosphorylase C-terminal domain"/>
    <property type="match status" value="1"/>
</dbReference>
<dbReference type="PROSITE" id="PS00647">
    <property type="entry name" value="THYMID_PHOSPHORYLASE"/>
    <property type="match status" value="1"/>
</dbReference>
<gene>
    <name type="ordered locus">AF_1342</name>
</gene>
<organism>
    <name type="scientific">Archaeoglobus fulgidus (strain ATCC 49558 / DSM 4304 / JCM 9628 / NBRC 100126 / VC-16)</name>
    <dbReference type="NCBI Taxonomy" id="224325"/>
    <lineage>
        <taxon>Archaea</taxon>
        <taxon>Methanobacteriati</taxon>
        <taxon>Methanobacteriota</taxon>
        <taxon>Archaeoglobi</taxon>
        <taxon>Archaeoglobales</taxon>
        <taxon>Archaeoglobaceae</taxon>
        <taxon>Archaeoglobus</taxon>
    </lineage>
</organism>
<reference key="1">
    <citation type="journal article" date="1997" name="Nature">
        <title>The complete genome sequence of the hyperthermophilic, sulphate-reducing archaeon Archaeoglobus fulgidus.</title>
        <authorList>
            <person name="Klenk H.-P."/>
            <person name="Clayton R.A."/>
            <person name="Tomb J.-F."/>
            <person name="White O."/>
            <person name="Nelson K.E."/>
            <person name="Ketchum K.A."/>
            <person name="Dodson R.J."/>
            <person name="Gwinn M.L."/>
            <person name="Hickey E.K."/>
            <person name="Peterson J.D."/>
            <person name="Richardson D.L."/>
            <person name="Kerlavage A.R."/>
            <person name="Graham D.E."/>
            <person name="Kyrpides N.C."/>
            <person name="Fleischmann R.D."/>
            <person name="Quackenbush J."/>
            <person name="Lee N.H."/>
            <person name="Sutton G.G."/>
            <person name="Gill S.R."/>
            <person name="Kirkness E.F."/>
            <person name="Dougherty B.A."/>
            <person name="McKenney K."/>
            <person name="Adams M.D."/>
            <person name="Loftus B.J."/>
            <person name="Peterson S.N."/>
            <person name="Reich C.I."/>
            <person name="McNeil L.K."/>
            <person name="Badger J.H."/>
            <person name="Glodek A."/>
            <person name="Zhou L."/>
            <person name="Overbeek R."/>
            <person name="Gocayne J.D."/>
            <person name="Weidman J.F."/>
            <person name="McDonald L.A."/>
            <person name="Utterback T.R."/>
            <person name="Cotton M.D."/>
            <person name="Spriggs T."/>
            <person name="Artiach P."/>
            <person name="Kaine B.P."/>
            <person name="Sykes S.M."/>
            <person name="Sadow P.W."/>
            <person name="D'Andrea K.P."/>
            <person name="Bowman C."/>
            <person name="Fujii C."/>
            <person name="Garland S.A."/>
            <person name="Mason T.M."/>
            <person name="Olsen G.J."/>
            <person name="Fraser C.M."/>
            <person name="Smith H.O."/>
            <person name="Woese C.R."/>
            <person name="Venter J.C."/>
        </authorList>
    </citation>
    <scope>NUCLEOTIDE SEQUENCE [LARGE SCALE GENOMIC DNA]</scope>
    <source>
        <strain>ATCC 49558 / DSM 4304 / JCM 9628 / NBRC 100126 / VC-16</strain>
    </source>
</reference>
<sequence length="505" mass="54693">MKFRIKTLPLRTERIAVVLSQDDAAELGLLPGDRVKVSYDGKSFVAEVEISQEFISSGEAGVCTFTAETCSLSEECVVEIVPFARPKSVEYIRKKLNGAKYEREEIKDIIGSISSDVLSDIEISAFILANEIVGMQNDEIQWMIEAMVEVGERVVFERGTVVDMHSIGGLPGNRFSLIAVPTVAAAGLLIPKTASRAITTASGTADTMEVLANVNLSVDEIKEITEEVGGVIAWNAPTGIAPADEKIIRVEYQLELSPKPHLMASVLSKKLGSGARFVAIDIPVGKKAKVENVDVGRGFANAMMEIGRNLNLKVATALTDGSQPLGRAIGPALEAREVLEVMERKVEGDLLEKSLGIAGILFEMTGIATNGYQHARKIFESGKTLEKFREIVAAQGGDESVKAEDVAVGDKTYTLHAAKEGYVREIDIAALNEIARTAGAPKDKGAGVYVHKKRGEVVKVGDPLLTIYAEKEWKLDNAIEVANTKQAFEISGVIIERYTMGRWWS</sequence>
<proteinExistence type="inferred from homology"/>
<keyword id="KW-0328">Glycosyltransferase</keyword>
<keyword id="KW-1185">Reference proteome</keyword>
<keyword id="KW-0808">Transferase</keyword>
<accession>O28927</accession>
<evidence type="ECO:0000255" key="1">
    <source>
        <dbReference type="HAMAP-Rule" id="MF_02132"/>
    </source>
</evidence>
<feature type="chain" id="PRO_0000059086" description="AMP phosphorylase 2">
    <location>
        <begin position="1"/>
        <end position="505"/>
    </location>
</feature>
<feature type="binding site" evidence="1">
    <location>
        <position position="169"/>
    </location>
    <ligand>
        <name>AMP</name>
        <dbReference type="ChEBI" id="CHEBI:456215"/>
    </ligand>
</feature>
<feature type="binding site" evidence="1">
    <location>
        <begin position="195"/>
        <end position="200"/>
    </location>
    <ligand>
        <name>AMP</name>
        <dbReference type="ChEBI" id="CHEBI:456215"/>
    </ligand>
</feature>
<feature type="binding site" evidence="1">
    <location>
        <position position="204"/>
    </location>
    <ligand>
        <name>AMP</name>
        <dbReference type="ChEBI" id="CHEBI:456215"/>
    </ligand>
</feature>
<feature type="binding site" evidence="1">
    <location>
        <position position="265"/>
    </location>
    <ligand>
        <name>AMP</name>
        <dbReference type="ChEBI" id="CHEBI:456215"/>
    </ligand>
</feature>
<feature type="binding site" evidence="1">
    <location>
        <position position="289"/>
    </location>
    <ligand>
        <name>AMP</name>
        <dbReference type="ChEBI" id="CHEBI:456215"/>
    </ligand>
</feature>